<feature type="chain" id="PRO_0000365379" description="Eukaryotic translation initiation factor 3 subunit C">
    <location>
        <begin position="1"/>
        <end position="922"/>
    </location>
</feature>
<feature type="domain" description="PCI" evidence="2">
    <location>
        <begin position="674"/>
        <end position="850"/>
    </location>
</feature>
<feature type="region of interest" description="Disordered" evidence="3">
    <location>
        <begin position="1"/>
        <end position="37"/>
    </location>
</feature>
<feature type="region of interest" description="Disordered" evidence="3">
    <location>
        <begin position="154"/>
        <end position="308"/>
    </location>
</feature>
<feature type="region of interest" description="Disordered" evidence="3">
    <location>
        <begin position="885"/>
        <end position="922"/>
    </location>
</feature>
<feature type="compositionally biased region" description="Low complexity" evidence="3">
    <location>
        <begin position="8"/>
        <end position="21"/>
    </location>
</feature>
<feature type="compositionally biased region" description="Acidic residues" evidence="3">
    <location>
        <begin position="165"/>
        <end position="189"/>
    </location>
</feature>
<feature type="compositionally biased region" description="Basic and acidic residues" evidence="3">
    <location>
        <begin position="207"/>
        <end position="216"/>
    </location>
</feature>
<feature type="compositionally biased region" description="Acidic residues" evidence="3">
    <location>
        <begin position="217"/>
        <end position="243"/>
    </location>
</feature>
<feature type="compositionally biased region" description="Basic and acidic residues" evidence="3">
    <location>
        <begin position="258"/>
        <end position="275"/>
    </location>
</feature>
<feature type="compositionally biased region" description="Acidic residues" evidence="3">
    <location>
        <begin position="289"/>
        <end position="301"/>
    </location>
</feature>
<feature type="compositionally biased region" description="Basic and acidic residues" evidence="3">
    <location>
        <begin position="888"/>
        <end position="907"/>
    </location>
</feature>
<accession>Q6P1V4</accession>
<comment type="function">
    <text evidence="1">Component of the eukaryotic translation initiation factor 3 (eIF-3) complex, which is involved in protein synthesis of a specialized repertoire of mRNAs and, together with other initiation factors, stimulates binding of mRNA and methionyl-tRNAi to the 40S ribosome. The eIF-3 complex specifically targets and initiates translation of a subset of mRNAs involved in cell proliferation.</text>
</comment>
<comment type="subunit">
    <text evidence="1">Component of the eukaryotic translation initiation factor 3 (eIF-3) complex, which is composed of 13 subunits: eif3a, eif3b, eif3c, eif3d, eif3e, eif3f, eif3g, eif3h, eif3i, eif3j, eif3k, eif3l and eif3m.</text>
</comment>
<comment type="subcellular location">
    <subcellularLocation>
        <location evidence="1">Cytoplasm</location>
    </subcellularLocation>
</comment>
<comment type="similarity">
    <text evidence="1">Belongs to the eIF-3 subunit C family.</text>
</comment>
<keyword id="KW-0963">Cytoplasm</keyword>
<keyword id="KW-0396">Initiation factor</keyword>
<keyword id="KW-0648">Protein biosynthesis</keyword>
<keyword id="KW-1185">Reference proteome</keyword>
<protein>
    <recommendedName>
        <fullName evidence="1">Eukaryotic translation initiation factor 3 subunit C</fullName>
        <shortName evidence="1">eIF3c</shortName>
    </recommendedName>
    <alternativeName>
        <fullName evidence="1">Eukaryotic translation initiation factor 3 subunit 8</fullName>
    </alternativeName>
</protein>
<dbReference type="EMBL" id="CR942354">
    <property type="protein sequence ID" value="CAJ83565.1"/>
    <property type="molecule type" value="mRNA"/>
</dbReference>
<dbReference type="EMBL" id="BC064857">
    <property type="protein sequence ID" value="AAH64857.1"/>
    <property type="molecule type" value="mRNA"/>
</dbReference>
<dbReference type="RefSeq" id="NP_989413.1">
    <property type="nucleotide sequence ID" value="NM_204082.2"/>
</dbReference>
<dbReference type="RefSeq" id="XP_031748438.1">
    <property type="nucleotide sequence ID" value="XM_031892578.1"/>
</dbReference>
<dbReference type="RefSeq" id="XP_031748439.1">
    <property type="nucleotide sequence ID" value="XM_031892579.1"/>
</dbReference>
<dbReference type="SMR" id="Q6P1V4"/>
<dbReference type="FunCoup" id="Q6P1V4">
    <property type="interactions" value="733"/>
</dbReference>
<dbReference type="STRING" id="8364.ENSXETP00000033838"/>
<dbReference type="PaxDb" id="8364-ENSXETP00000006431"/>
<dbReference type="GeneID" id="395052"/>
<dbReference type="KEGG" id="xtr:395052"/>
<dbReference type="AGR" id="Xenbase:XB-GENE-5720067"/>
<dbReference type="CTD" id="8663"/>
<dbReference type="Xenbase" id="XB-GENE-5720067">
    <property type="gene designation" value="eif3c"/>
</dbReference>
<dbReference type="eggNOG" id="KOG1076">
    <property type="taxonomic scope" value="Eukaryota"/>
</dbReference>
<dbReference type="HOGENOM" id="CLU_004304_0_0_1"/>
<dbReference type="InParanoid" id="Q6P1V4"/>
<dbReference type="OMA" id="FRCGLIK"/>
<dbReference type="OrthoDB" id="29647at2759"/>
<dbReference type="PhylomeDB" id="Q6P1V4"/>
<dbReference type="TreeFam" id="TF101520"/>
<dbReference type="Reactome" id="R-XTR-156827">
    <property type="pathway name" value="L13a-mediated translational silencing of Ceruloplasmin expression"/>
</dbReference>
<dbReference type="Reactome" id="R-XTR-72689">
    <property type="pathway name" value="Formation of a pool of free 40S subunits"/>
</dbReference>
<dbReference type="Reactome" id="R-XTR-72695">
    <property type="pathway name" value="Formation of the ternary complex, and subsequently, the 43S complex"/>
</dbReference>
<dbReference type="Reactome" id="R-XTR-72702">
    <property type="pathway name" value="Ribosomal scanning and start codon recognition"/>
</dbReference>
<dbReference type="Proteomes" id="UP000008143">
    <property type="component" value="Chromosome 9"/>
</dbReference>
<dbReference type="Bgee" id="ENSXETG00000002941">
    <property type="expression patterns" value="Expressed in neurula embryo and 22 other cell types or tissues"/>
</dbReference>
<dbReference type="ExpressionAtlas" id="Q6P1V4">
    <property type="expression patterns" value="baseline"/>
</dbReference>
<dbReference type="GO" id="GO:0016282">
    <property type="term" value="C:eukaryotic 43S preinitiation complex"/>
    <property type="evidence" value="ECO:0007669"/>
    <property type="project" value="UniProtKB-UniRule"/>
</dbReference>
<dbReference type="GO" id="GO:0033290">
    <property type="term" value="C:eukaryotic 48S preinitiation complex"/>
    <property type="evidence" value="ECO:0007669"/>
    <property type="project" value="UniProtKB-UniRule"/>
</dbReference>
<dbReference type="GO" id="GO:0005852">
    <property type="term" value="C:eukaryotic translation initiation factor 3 complex"/>
    <property type="evidence" value="ECO:0000250"/>
    <property type="project" value="UniProtKB"/>
</dbReference>
<dbReference type="GO" id="GO:0003723">
    <property type="term" value="F:RNA binding"/>
    <property type="evidence" value="ECO:0007669"/>
    <property type="project" value="InterPro"/>
</dbReference>
<dbReference type="GO" id="GO:0003743">
    <property type="term" value="F:translation initiation factor activity"/>
    <property type="evidence" value="ECO:0007669"/>
    <property type="project" value="UniProtKB-UniRule"/>
</dbReference>
<dbReference type="GO" id="GO:0031369">
    <property type="term" value="F:translation initiation factor binding"/>
    <property type="evidence" value="ECO:0007669"/>
    <property type="project" value="InterPro"/>
</dbReference>
<dbReference type="GO" id="GO:0001732">
    <property type="term" value="P:formation of cytoplasmic translation initiation complex"/>
    <property type="evidence" value="ECO:0007669"/>
    <property type="project" value="UniProtKB-UniRule"/>
</dbReference>
<dbReference type="GO" id="GO:0006413">
    <property type="term" value="P:translational initiation"/>
    <property type="evidence" value="ECO:0000250"/>
    <property type="project" value="UniProtKB"/>
</dbReference>
<dbReference type="HAMAP" id="MF_03002">
    <property type="entry name" value="eIF3c"/>
    <property type="match status" value="1"/>
</dbReference>
<dbReference type="InterPro" id="IPR027516">
    <property type="entry name" value="EIF3C"/>
</dbReference>
<dbReference type="InterPro" id="IPR008905">
    <property type="entry name" value="EIF3C_N_dom"/>
</dbReference>
<dbReference type="InterPro" id="IPR000717">
    <property type="entry name" value="PCI_dom"/>
</dbReference>
<dbReference type="InterPro" id="IPR036390">
    <property type="entry name" value="WH_DNA-bd_sf"/>
</dbReference>
<dbReference type="PANTHER" id="PTHR13937">
    <property type="entry name" value="EUKARYOTIC TRANSLATION INITATION FACTOR 3, SUBUNIT 8 EIF3S8 -RELATED"/>
    <property type="match status" value="1"/>
</dbReference>
<dbReference type="PANTHER" id="PTHR13937:SF0">
    <property type="entry name" value="EUKARYOTIC TRANSLATION INITIATION FACTOR 3 SUBUNIT C-RELATED"/>
    <property type="match status" value="1"/>
</dbReference>
<dbReference type="Pfam" id="PF05470">
    <property type="entry name" value="eIF-3c_N"/>
    <property type="match status" value="2"/>
</dbReference>
<dbReference type="Pfam" id="PF01399">
    <property type="entry name" value="PCI"/>
    <property type="match status" value="1"/>
</dbReference>
<dbReference type="SMART" id="SM00088">
    <property type="entry name" value="PINT"/>
    <property type="match status" value="1"/>
</dbReference>
<dbReference type="SUPFAM" id="SSF46785">
    <property type="entry name" value="Winged helix' DNA-binding domain"/>
    <property type="match status" value="1"/>
</dbReference>
<dbReference type="PROSITE" id="PS50250">
    <property type="entry name" value="PCI"/>
    <property type="match status" value="1"/>
</dbReference>
<sequence>MSRFFATGSDSESESSLSGDEILPKPVGGTFGKQPIILSDDEEDTKRVVRSAKDKRFEELTNLIKTIRNAMKIRDMTKCLEEFEQLGKAFIKAKNIVDKEGVPRFYIRLLSDLEDYLNELWEDKEGKKKMNKNNAKALSTLRQKLRKYNRDFEAPIAAYKQNPEESADEDQEKDEDSEASSSSDDDSDEGMSASKFLKKADSAPPESRSKFLKKEEAEDEESSSDDEDWGSDSDESDSDESDDENKYTSMASRFLKKTVNEGDRQAAEKKKEEKAKKKQHRKVKRKDEEGEEEEDDNEGGGEWEKVKGGVPLVKEKPKMFAKGTEITPPIVVKKLNEILQARGKKGTDRAAQIDLLHLLAGIAEENNLGQGIAVKIKFNIVASLYDYNTNLATYMKADMWKKCLDSIHDLLDILFANSNMFIGEHISEDSENLSNTDQPLRVRGCILTLIERMDEEFTKIMQNTDPHSQEYVDNLKDEARVCEVIERAQKYLQEKGSTEEVCRVYLRRIMHTYYKFDYKAHQRQLSTGQESKSEQDQAENEAEDSAILMDRLCKYIYAKDRTDRIRTCAILCHIYHHALHNRWFQARDLMLMSHLQDNIQHADPPVQILYNRTMVQLGICAFRQGMIRDAHNALLDIQSSGRAKELLGQGLLMRTMQERNQEQEKIEKRRQIPFHMHINLELLECVYLVSAMLLEIPYMAAHEFDARRRMISKQFHHQLRVGERQPLLGPPESMREHVVAASKAMKMGDWKTCKNFIINEKMNGKVWDLFPEAERVRSMLIRKIQEESLRTYLFTYSSVYDSIRMGILGDMFQLEIPTVHSIISKMIINEELMASLDQPTQTVVMHGTEPSSLQNTALQLAEKLGNLVENNERIFDHKQGSYGGYFNRGDRGDRDQKDQYQRKEGGYMRRGYRRDQQGQSNY</sequence>
<name>EIF3C_XENTR</name>
<evidence type="ECO:0000255" key="1">
    <source>
        <dbReference type="HAMAP-Rule" id="MF_03002"/>
    </source>
</evidence>
<evidence type="ECO:0000255" key="2">
    <source>
        <dbReference type="PROSITE-ProRule" id="PRU01185"/>
    </source>
</evidence>
<evidence type="ECO:0000256" key="3">
    <source>
        <dbReference type="SAM" id="MobiDB-lite"/>
    </source>
</evidence>
<gene>
    <name type="primary">eif3c</name>
    <name type="synonym">eif3s8</name>
    <name type="ORF">TGas102o09.1</name>
</gene>
<proteinExistence type="evidence at transcript level"/>
<organism>
    <name type="scientific">Xenopus tropicalis</name>
    <name type="common">Western clawed frog</name>
    <name type="synonym">Silurana tropicalis</name>
    <dbReference type="NCBI Taxonomy" id="8364"/>
    <lineage>
        <taxon>Eukaryota</taxon>
        <taxon>Metazoa</taxon>
        <taxon>Chordata</taxon>
        <taxon>Craniata</taxon>
        <taxon>Vertebrata</taxon>
        <taxon>Euteleostomi</taxon>
        <taxon>Amphibia</taxon>
        <taxon>Batrachia</taxon>
        <taxon>Anura</taxon>
        <taxon>Pipoidea</taxon>
        <taxon>Pipidae</taxon>
        <taxon>Xenopodinae</taxon>
        <taxon>Xenopus</taxon>
        <taxon>Silurana</taxon>
    </lineage>
</organism>
<reference key="1">
    <citation type="submission" date="2006-10" db="EMBL/GenBank/DDBJ databases">
        <authorList>
            <consortium name="Sanger Xenopus tropicalis EST/cDNA project"/>
        </authorList>
    </citation>
    <scope>NUCLEOTIDE SEQUENCE [LARGE SCALE MRNA]</scope>
    <source>
        <tissue>Gastrula</tissue>
    </source>
</reference>
<reference key="2">
    <citation type="submission" date="2004-01" db="EMBL/GenBank/DDBJ databases">
        <authorList>
            <consortium name="NIH - Xenopus Gene Collection (XGC) project"/>
        </authorList>
    </citation>
    <scope>NUCLEOTIDE SEQUENCE [LARGE SCALE MRNA]</scope>
    <source>
        <tissue>Embryo</tissue>
    </source>
</reference>